<accession>P41867</accession>
<feature type="peptide" id="PRO_0000043674" description="CalliFMRFamide-12">
    <location>
        <begin position="1"/>
        <end position="10"/>
    </location>
</feature>
<feature type="modified residue" description="Phenylalanine amide" evidence="1">
    <location>
        <position position="10"/>
    </location>
</feature>
<reference key="1">
    <citation type="journal article" date="1992" name="Proc. Natl. Acad. Sci. U.S.A.">
        <title>Isolation, structure, and activity of -Phe-Met-Arg-Phe-NH2 neuropeptides (designated calliFMRFamides) from the blowfly Calliphora vomitoria.</title>
        <authorList>
            <person name="Duve H."/>
            <person name="Johnsen A.H."/>
            <person name="Sewell J.C."/>
            <person name="Scott A.G."/>
            <person name="Orchard I."/>
            <person name="Rehfeld J.F."/>
            <person name="Thorpe A."/>
        </authorList>
    </citation>
    <scope>PROTEIN SEQUENCE</scope>
    <scope>AMIDATION AT PHE-10</scope>
    <source>
        <tissue>Thoracic ganglion</tissue>
    </source>
</reference>
<proteinExistence type="evidence at protein level"/>
<protein>
    <recommendedName>
        <fullName>CalliFMRFamide-12</fullName>
    </recommendedName>
</protein>
<sequence length="10" mass="1156">AAGQDNFMRF</sequence>
<name>FARC_CALVO</name>
<dbReference type="PIR" id="C44787">
    <property type="entry name" value="C44787"/>
</dbReference>
<dbReference type="GO" id="GO:0005576">
    <property type="term" value="C:extracellular region"/>
    <property type="evidence" value="ECO:0007669"/>
    <property type="project" value="UniProtKB-SubCell"/>
</dbReference>
<dbReference type="GO" id="GO:0007218">
    <property type="term" value="P:neuropeptide signaling pathway"/>
    <property type="evidence" value="ECO:0007669"/>
    <property type="project" value="UniProtKB-KW"/>
</dbReference>
<evidence type="ECO:0000269" key="1">
    <source>
    </source>
</evidence>
<evidence type="ECO:0000305" key="2"/>
<keyword id="KW-0027">Amidation</keyword>
<keyword id="KW-0903">Direct protein sequencing</keyword>
<keyword id="KW-0527">Neuropeptide</keyword>
<keyword id="KW-0964">Secreted</keyword>
<organism>
    <name type="scientific">Calliphora vomitoria</name>
    <name type="common">Blue bottle fly</name>
    <name type="synonym">Musca vomitoria</name>
    <dbReference type="NCBI Taxonomy" id="27454"/>
    <lineage>
        <taxon>Eukaryota</taxon>
        <taxon>Metazoa</taxon>
        <taxon>Ecdysozoa</taxon>
        <taxon>Arthropoda</taxon>
        <taxon>Hexapoda</taxon>
        <taxon>Insecta</taxon>
        <taxon>Pterygota</taxon>
        <taxon>Neoptera</taxon>
        <taxon>Endopterygota</taxon>
        <taxon>Diptera</taxon>
        <taxon>Brachycera</taxon>
        <taxon>Muscomorpha</taxon>
        <taxon>Oestroidea</taxon>
        <taxon>Calliphoridae</taxon>
        <taxon>Calliphorinae</taxon>
        <taxon>Calliphora</taxon>
    </lineage>
</organism>
<comment type="subcellular location">
    <subcellularLocation>
        <location>Secreted</location>
    </subcellularLocation>
</comment>
<comment type="similarity">
    <text evidence="2">Belongs to the FARP (FMRFamide related peptide) family.</text>
</comment>